<gene>
    <name evidence="15" type="primary">Per2</name>
</gene>
<accession>Q9Z301</accession>
<feature type="chain" id="PRO_0000162632" description="Period circadian protein homolog 2">
    <location>
        <begin position="1"/>
        <end position="1257"/>
    </location>
</feature>
<feature type="domain" description="PAS 1" evidence="4">
    <location>
        <begin position="179"/>
        <end position="246"/>
    </location>
</feature>
<feature type="domain" description="PAS 2" evidence="4">
    <location>
        <begin position="319"/>
        <end position="385"/>
    </location>
</feature>
<feature type="domain" description="PAC" evidence="3">
    <location>
        <begin position="393"/>
        <end position="436"/>
    </location>
</feature>
<feature type="region of interest" description="Disordered" evidence="5">
    <location>
        <begin position="1"/>
        <end position="59"/>
    </location>
</feature>
<feature type="region of interest" description="Disordered" evidence="5">
    <location>
        <begin position="471"/>
        <end position="567"/>
    </location>
</feature>
<feature type="region of interest" description="Important for protein stability" evidence="11">
    <location>
        <begin position="478"/>
        <end position="482"/>
    </location>
</feature>
<feature type="region of interest" description="CSNK1E binding domain" evidence="2">
    <location>
        <begin position="510"/>
        <end position="709"/>
    </location>
</feature>
<feature type="region of interest" description="Disordered" evidence="5">
    <location>
        <begin position="678"/>
        <end position="706"/>
    </location>
</feature>
<feature type="region of interest" description="Disordered" evidence="5">
    <location>
        <begin position="757"/>
        <end position="833"/>
    </location>
</feature>
<feature type="region of interest" description="Interaction with PPARG" evidence="2">
    <location>
        <begin position="882"/>
        <end position="1067"/>
    </location>
</feature>
<feature type="region of interest" description="Disordered" evidence="5">
    <location>
        <begin position="993"/>
        <end position="1044"/>
    </location>
</feature>
<feature type="region of interest" description="Disordered" evidence="5">
    <location>
        <begin position="1070"/>
        <end position="1108"/>
    </location>
</feature>
<feature type="region of interest" description="CRY binding domain" evidence="7">
    <location>
        <begin position="1157"/>
        <end position="1257"/>
    </location>
</feature>
<feature type="region of interest" description="Disordered" evidence="5">
    <location>
        <begin position="1226"/>
        <end position="1257"/>
    </location>
</feature>
<feature type="short sequence motif" description="Nuclear export signal 1" evidence="2">
    <location>
        <begin position="109"/>
        <end position="118"/>
    </location>
</feature>
<feature type="short sequence motif" description="LXXLL">
    <location>
        <begin position="306"/>
        <end position="310"/>
    </location>
</feature>
<feature type="short sequence motif" description="Nuclear export signal 2" evidence="2">
    <location>
        <begin position="460"/>
        <end position="469"/>
    </location>
</feature>
<feature type="short sequence motif" description="Nuclear localization signal" evidence="7">
    <location>
        <begin position="778"/>
        <end position="794"/>
    </location>
</feature>
<feature type="short sequence motif" description="Nuclear export signal 3" evidence="2">
    <location>
        <begin position="983"/>
        <end position="990"/>
    </location>
</feature>
<feature type="short sequence motif" description="LXXLL">
    <location>
        <begin position="1051"/>
        <end position="1055"/>
    </location>
</feature>
<feature type="compositionally biased region" description="Low complexity" evidence="5">
    <location>
        <begin position="8"/>
        <end position="25"/>
    </location>
</feature>
<feature type="compositionally biased region" description="Polar residues" evidence="5">
    <location>
        <begin position="35"/>
        <end position="53"/>
    </location>
</feature>
<feature type="compositionally biased region" description="Polar residues" evidence="5">
    <location>
        <begin position="493"/>
        <end position="504"/>
    </location>
</feature>
<feature type="compositionally biased region" description="Polar residues" evidence="5">
    <location>
        <begin position="518"/>
        <end position="528"/>
    </location>
</feature>
<feature type="compositionally biased region" description="Polar residues" evidence="5">
    <location>
        <begin position="541"/>
        <end position="555"/>
    </location>
</feature>
<feature type="compositionally biased region" description="Basic residues" evidence="5">
    <location>
        <begin position="779"/>
        <end position="792"/>
    </location>
</feature>
<feature type="compositionally biased region" description="Low complexity" evidence="5">
    <location>
        <begin position="821"/>
        <end position="832"/>
    </location>
</feature>
<feature type="compositionally biased region" description="Low complexity" evidence="5">
    <location>
        <begin position="996"/>
        <end position="1014"/>
    </location>
</feature>
<feature type="compositionally biased region" description="Polar residues" evidence="5">
    <location>
        <begin position="1033"/>
        <end position="1044"/>
    </location>
</feature>
<feature type="compositionally biased region" description="Low complexity" evidence="5">
    <location>
        <begin position="1070"/>
        <end position="1089"/>
    </location>
</feature>
<feature type="compositionally biased region" description="Polar residues" evidence="5">
    <location>
        <begin position="1090"/>
        <end position="1108"/>
    </location>
</feature>
<feature type="modified residue" description="Phosphoserine" evidence="2">
    <location>
        <position position="525"/>
    </location>
</feature>
<feature type="modified residue" description="Phosphoserine" evidence="2">
    <location>
        <position position="528"/>
    </location>
</feature>
<feature type="modified residue" description="Phosphoserine" evidence="2">
    <location>
        <position position="531"/>
    </location>
</feature>
<feature type="modified residue" description="Phosphoserine" evidence="2">
    <location>
        <position position="538"/>
    </location>
</feature>
<feature type="modified residue" description="Phosphoserine" evidence="2">
    <location>
        <position position="544"/>
    </location>
</feature>
<feature type="modified residue" description="Phosphothreonine" evidence="2">
    <location>
        <position position="554"/>
    </location>
</feature>
<feature type="modified residue" description="Phosphoserine" evidence="1">
    <location>
        <position position="659"/>
    </location>
</feature>
<feature type="modified residue" description="Phosphoserine" evidence="16">
    <location>
        <position position="693"/>
    </location>
</feature>
<feature type="modified residue" description="Phosphoserine" evidence="16">
    <location>
        <position position="697"/>
    </location>
</feature>
<feature type="modified residue" description="Phosphoserine" evidence="2">
    <location>
        <position position="706"/>
    </location>
</feature>
<feature type="modified residue" description="Phosphoserine" evidence="2">
    <location>
        <position position="758"/>
    </location>
</feature>
<feature type="modified residue" description="Phosphoserine" evidence="2">
    <location>
        <position position="763"/>
    </location>
</feature>
<feature type="modified residue" description="Phosphothreonine" evidence="2">
    <location>
        <position position="858"/>
    </location>
</feature>
<feature type="modified residue" description="Phosphoserine" evidence="2">
    <location>
        <position position="939"/>
    </location>
</feature>
<feature type="modified residue" description="Phosphothreonine" evidence="2">
    <location>
        <position position="964"/>
    </location>
</feature>
<feature type="modified residue" description="Phosphoserine" evidence="2">
    <location>
        <position position="971"/>
    </location>
</feature>
<feature type="modified residue" description="Phosphoserine" evidence="2">
    <location>
        <position position="1126"/>
    </location>
</feature>
<feature type="mutagenesis site" description="No effect on interaction with BTRC and FBXW11. Strongly decreases interaction with BTRC and FBXW11 and increases protein stability; when associated with 478-N--N-482." evidence="11">
    <original>SGCSS</original>
    <variation>IGCSI</variation>
    <location>
        <begin position="93"/>
        <end position="97"/>
    </location>
</feature>
<feature type="mutagenesis site" description="Strongly decreases interaction with BTRC and FBXW11 and increases protein stability. Strongly decreases interaction with BTRC and FBXW11 and increases protein stability; when associated with 93-I--I-97." evidence="11">
    <original>SGYGS</original>
    <variation>NGYGN</variation>
    <location>
        <begin position="478"/>
        <end position="482"/>
    </location>
</feature>
<organism>
    <name type="scientific">Rattus norvegicus</name>
    <name type="common">Rat</name>
    <dbReference type="NCBI Taxonomy" id="10116"/>
    <lineage>
        <taxon>Eukaryota</taxon>
        <taxon>Metazoa</taxon>
        <taxon>Chordata</taxon>
        <taxon>Craniata</taxon>
        <taxon>Vertebrata</taxon>
        <taxon>Euteleostomi</taxon>
        <taxon>Mammalia</taxon>
        <taxon>Eutheria</taxon>
        <taxon>Euarchontoglires</taxon>
        <taxon>Glires</taxon>
        <taxon>Rodentia</taxon>
        <taxon>Myomorpha</taxon>
        <taxon>Muroidea</taxon>
        <taxon>Muridae</taxon>
        <taxon>Murinae</taxon>
        <taxon>Rattus</taxon>
    </lineage>
</organism>
<proteinExistence type="evidence at protein level"/>
<comment type="function">
    <text evidence="9">Transcriptional repressor which forms a core component of the circadian clock. The circadian clock, an internal time-keeping system, regulates various physiological processes through the generation of approximately 24 hour circadian rhythms in gene expression, which are translated into rhythms in metabolism and behavior. It is derived from the Latin roots 'circa' (about) and 'diem' (day) and acts as an important regulator of a wide array of physiological functions including metabolism, sleep, body temperature, blood pressure, endocrine, immune, cardiovascular, and renal function. Consists of two major components: the central clock, residing in the suprachiasmatic nucleus (SCN) of the brain, and the peripheral clocks that are present in nearly every tissue and organ system. Both the central and peripheral clocks can be reset by environmental cues, also known as Zeitgebers (German for 'timegivers'). The predominant Zeitgeber for the central clock is light, which is sensed by retina and signals directly to the SCN. The central clock entrains the peripheral clocks through neuronal and hormonal signals, body temperature and feeding-related cues, aligning all clocks with the external light/dark cycle. Circadian rhythms allow an organism to achieve temporal homeostasis with its environment at the molecular level by regulating gene expression to create a peak of protein expression once every 24 hours to control when a particular physiological process is most active with respect to the solar day. Transcription and translation of core clock components (CLOCK, NPAS2, BMAL1, BMAL2, PER1, PER2, PER3, CRY1 and CRY2) plays a critical role in rhythm generation, whereas delays imposed by post-translational modifications (PTMs) are important for determining the period (tau) of the rhythms (tau refers to the period of a rhythm and is the length, in time, of one complete cycle). A diurnal rhythm is synchronized with the day/night cycle, while the ultradian and infradian rhythms have a period shorter and longer than 24 hours, respectively. Disruptions in the circadian rhythms contribute to the pathology of cardiovascular diseases, cancer, metabolic syndrome and aging. A transcription/translation feedback loop (TTFL) forms the core of the molecular circadian clock mechanism. Transcription factors, CLOCK or NPAS2 and BMAL1 or BMAL2, form the positive limb of the feedback loop, act in the form of a heterodimer and activate the transcription of core clock genes and clock-controlled genes (involved in key metabolic processes), harboring E-box elements (5'-CACGTG-3') within their promoters. The core clock genes: PER1/2/3 and CRY1/2 which are transcriptional repressors form the negative limb of the feedback loop and interact with the CLOCK|NPAS2-BMAL1|BMAL2 heterodimer inhibiting its activity and thereby negatively regulating their own expression. This heterodimer also activates nuclear receptors NR1D1/2 and RORA/B/G, which form a second feedback loop and which activate and repress BMAL1 transcription, respectively. PER1 and PER2 proteins transport CRY1 and CRY2 into the nucleus with appropriate circadian timing, but also contribute directly to repression of clock-controlled target genes through interaction with several classes of RNA-binding proteins, helicases and others transcriptional repressors. PER appears to regulate circadian control of transcription by at least three different modes. First, interacts directly with the CLOCK-BMAL1 at the tail end of the nascent transcript peak to recruit complexes containing the SIN3-HDAC that remodel chromatin to repress transcription. Second, brings H3K9 methyltransferases such as SUV39H1 and SUV39H2 to the E-box elements of the circadian target genes, like PER2 itself or PER1. The recruitment of each repressive modifier to the DNA seems to be very precisely temporally orchestrated by the large PER complex, the deacetylases acting before than the methyltransferases. Additionally, large PER complexes are also recruited to the target genes 3' termination site through interactions with RNA-binding proteins and helicases that may play a role in transcription termination to regulate transcription independently of CLOCK-BMAL1 interactions. Recruitment of large PER complexes to the elongating polymerase at PER and CRY termination sites inhibited SETX action, impeding RNA polymerase II release and thereby repressing transcriptional reinitiation. May propagate clock information to metabolic pathways via the interaction with nuclear receptors. Coactivator of PPARA and corepressor of NR1D1, binds rhythmically at the promoter of nuclear receptors target genes like BMAL1 or G6PC1. Directly and specifically represses PPARG proadipogenic activity by blocking PPARG recruitment to target promoters and thereby transcriptional activation. Required for fatty acid and lipid metabolism, is involved as well in the regulation of circulating insulin levels. Plays an important role in the maintenance of cardiovascular functions through the regulation of NO and vasodilatatory prostaglandins production in aortas. Controls circadian glutamate uptake in synaptic vesicles through the regulation of VGLUT1 expression. May also be involved in the regulation of inflammatory processes. Represses the CLOCK-BMAL1 induced transcription of BHLHE40/DEC1 and ATF4. Negatively regulates the formation of the TIMELESS-CRY1 complex by competing with TIMELESS for binding to CRY1.</text>
</comment>
<comment type="subunit">
    <text evidence="1 2 6 7 11">Homodimer. Component of the circadian core oscillator, which includes the CRY proteins, CLOCK or NPAS2, BMAL1 or BMAL2, CSNK1D and/or CSNK1E, TIMELESS, and the PER proteins. Interacts with CLOCK-BMAL1 (off DNA). Interacts directly with PER1 and PER3, and through a C-terminal domain, with CRY1 and CRY2. Interacts (via PAS 2 domain) with TIMELESS. Interacts with NFIL3. Different large complexes have been identified with different repressive functions. The core of PER complexes is composed of at least PER1, PER2, PER3, CRY1, CRY2, CSNK1D and/or CSNK1E. The large PER complex involved in the repression of transcriptional termination is composed of at least PER2, CDK9, DDX5, DHX9, NCBP1 and POLR2A (active). The large PER complex involved in the histone deacetylation is composed of at least HDAC1, PER2, SFPQ and SIN3A. The large PER complex involved in the histone methylation is composed of at least PER2, CBX3, TRIM28, SUV39H1 and/or SUV39H2; CBX3 mediates the formation of the complex. Interacts with SETX; the interaction inhibits termination of circadian target genes. Interacts with the nuclear receptors HNF4A, NR1D1, NR4A2, RORA, PPARA, PPARG and THRA; the interaction with at least PPARG is ligand dependent. Interacts with PML. Interacts (phosphorylated) with BTRC and FBXW11; the interactions trigger proteasomal degradation. Interacts with NONO and SFPQ. Interacts with CAVIN3 (By similarity). Interacts with MAGEL2 (By similarity). Interacts with MAP1LC3B (By similarity). Interacts with HNF4A (By similarity).</text>
</comment>
<comment type="subcellular location">
    <subcellularLocation>
        <location evidence="7">Nucleus</location>
    </subcellularLocation>
    <subcellularLocation>
        <location evidence="7">Cytoplasm</location>
    </subcellularLocation>
    <subcellularLocation>
        <location evidence="2">Cytoplasm</location>
        <location evidence="2">Perinuclear region</location>
    </subcellularLocation>
    <text evidence="2">Nucleocytoplasmic shuttling is effected by interaction with other circadian core oscillator proteins and/or by phosphorylation. Translocate to the nucleus after phosphorylation by CSNK1D or CSNK1E. Also translocated to the nucleus by CRY1 or CRY2. PML regulates its nuclear localization (By similarity).</text>
</comment>
<comment type="tissue specificity">
    <text evidence="8 10 12">Expressed in all tissues examined including eye, brain, heart, lung, spleen, liver, pancreas and kidney. In the CNS, highly expressed in the SCN, internal granular layer of granular cells of the olfactory bulb, tuberculum olfactorium, piriform cortex, gyrus dentatus of the hippocampus, cerebellum, pars tuberalis/median eminence, and pituitary, and moderately in the tenia tecta, caudate putamen, accumbens nucleus, superior and inferior colliculus and pineal gland.</text>
</comment>
<comment type="induction">
    <text evidence="10 12">In eye, brain, heart, lung, spleen, liver, pancreas and kidney, expression exhibits a circadian rhythm in the presence of light/dark cycles.</text>
</comment>
<comment type="PTM">
    <text evidence="2">Acetylated. Deacetylated by SIRT1, resulting in decreased protein stability. Deacetylated by SIRT6, preventing its degradation by the proteasome, resulting in increased protein stability.</text>
</comment>
<comment type="PTM">
    <text evidence="2">Phosphorylated by CSNK1E and CSNK1D. Phosphorylation results in PER2 protein degradation. May be dephosphorylated by PP1 (By similarity).</text>
</comment>
<comment type="PTM">
    <text evidence="2">Ubiquitinated, leading to its proteasomal degradation. Ubiquitination may be inhibited by CRY1.</text>
</comment>
<sequence>MNGYVDFSPSPTSPTQEPGEPQPTQAVLQEDVDMSSGSSGNENCSTGRDSQGSDCDDSGKELRMLVESSNTHPSPDDTFRLMMTEAEHNPSTSGCSSEQSAKADAHKELIRTLRELKVHLPADKKAKGKASTLATLKYALRSVKQVKANEEYYQLLMSSESQPCSVDVPSYTMEQVEGITSEYIVKNSDMFAVAVSLVSGKILYISNQVAPIFHCKKDAFSDAKFVEFLAPHDVSVFHSYTTPYKLPPWSVSSGLDSFTQECMEEKSFFCRVSVGKHHENEIRYQPFRMTPYLVKVQEQKGAASQLCCLLLAERVHSGYEAPRIPPEKRIFTTTHTPNCLFQDVDERAVPLLGYLPQDLIETPVLVQLHPSDRPLMLAIHKKILQASGQPFDYSPIRFRTRNGEYITLDTSWSSFINPWSRKISFIIGRHKVRVGPLNEDVFAASPCPEEKTPHPSVQELTEQIHRLLMQPVPHSGSSGYGSLGSNGSHEHLMSQTSSSDSNGQEESHWRRSGIFKTSGKSQSKSHFSPESGGQKEASVAEMQSSPPAQVRSVTTMERDSSGASLPKASFPEELTYKSQPPCSYQQISCLDSVIRYLESCNEAATLKRKCEFPANIPSRKATVSPGLHSGEAARSSKVTSHTEVSAHLSSLALPGKAESVVSLTSQCSYSSTIVHVGDKKPQPELETVEDVASGPESQDDAAGGLSQEKGSLQKLGLTKEVLAAHTQREEQGFLQRFREVSRLGALQAHCQNYLQERSRAPASDRGLRNASGIESSWKKTGKNRKLKSKRVKTRDSSESTGSGGPVSHRPPLVGLNATAWSPSDTSQSSCPSAPFPAPVPAYPLPVFPAPGIVSTPGTVVAPPAAAHTGFTMPVVPMGTQPEFAVQPLPFAAPLAPVMAFMLPSYPFPPATPNLPQAFFPSQPHFPAHPTLASEITPASQAEFPSRTSMLRQPCACPVTPPAGTVALGRASPPLFQSRGSSPLQLNLLQLEEAPESSTGAAGTLGTTGTAASGLDCTSGASRDRQPKAPPTCSEPSDTQNSDAISTSSDLLNLLLGEDLCSATGSALSRSGASATSDSLGSSSLGCDTSRSGAGSSDTSHTSKYFGSIDSSENNHKAKMITDTEESEQFIKYVLQDPIWLLMANTDDNIMMTYQLPSRDLQAVLKEDQEKLKLLQRSQPHFTEGQRRELREVHPWVHTGGLPTAIDVTGCVYCESEEKGNLCLPYEEDSPSLGLCDTSEAKEEESGQLANPRKEAQT</sequence>
<evidence type="ECO:0000250" key="1">
    <source>
        <dbReference type="UniProtKB" id="O15055"/>
    </source>
</evidence>
<evidence type="ECO:0000250" key="2">
    <source>
        <dbReference type="UniProtKB" id="O54943"/>
    </source>
</evidence>
<evidence type="ECO:0000255" key="3"/>
<evidence type="ECO:0000255" key="4">
    <source>
        <dbReference type="PROSITE-ProRule" id="PRU00140"/>
    </source>
</evidence>
<evidence type="ECO:0000256" key="5">
    <source>
        <dbReference type="SAM" id="MobiDB-lite"/>
    </source>
</evidence>
<evidence type="ECO:0000269" key="6">
    <source>
    </source>
</evidence>
<evidence type="ECO:0000269" key="7">
    <source>
    </source>
</evidence>
<evidence type="ECO:0000269" key="8">
    <source>
    </source>
</evidence>
<evidence type="ECO:0000269" key="9">
    <source>
    </source>
</evidence>
<evidence type="ECO:0000269" key="10">
    <source>
    </source>
</evidence>
<evidence type="ECO:0000269" key="11">
    <source>
    </source>
</evidence>
<evidence type="ECO:0000269" key="12">
    <source>
    </source>
</evidence>
<evidence type="ECO:0000305" key="13"/>
<evidence type="ECO:0000312" key="14">
    <source>
        <dbReference type="EMBL" id="BAA34187.1"/>
    </source>
</evidence>
<evidence type="ECO:0000312" key="15">
    <source>
        <dbReference type="RGD" id="61945"/>
    </source>
</evidence>
<evidence type="ECO:0007744" key="16">
    <source>
    </source>
</evidence>
<reference evidence="13 14" key="1">
    <citation type="journal article" date="1998" name="J. Biol. Chem.">
        <title>Multitissue circadian expression of rat period homologue (rPer2) mRNA is governed by the mammalian circadian clock, the suprachiasmatic nucleus in the brain.</title>
        <authorList>
            <person name="Sakamoto K."/>
            <person name="Nagase T."/>
            <person name="Fukui H."/>
            <person name="Horikawa K."/>
            <person name="Okada T."/>
            <person name="Tanaka H."/>
            <person name="Sato K."/>
            <person name="Miyake Y."/>
            <person name="Ohara O."/>
            <person name="Kako K."/>
            <person name="Ishida N."/>
        </authorList>
    </citation>
    <scope>NUCLEOTIDE SEQUENCE [MRNA]</scope>
    <scope>TISSUE SPECIFICITY</scope>
    <scope>INDUCTION</scope>
    <source>
        <strain evidence="14">Sprague-Dawley</strain>
        <tissue evidence="14">Brain</tissue>
    </source>
</reference>
<reference evidence="13" key="2">
    <citation type="journal article" date="2000" name="Biochem. Biophys. Res. Commun.">
        <title>Molecular characterization and nuclear localization of rat timeless-like gene product.</title>
        <authorList>
            <person name="Sakamoto S."/>
            <person name="Miyazaki K."/>
            <person name="Fukui H."/>
            <person name="Oishi K."/>
            <person name="Hayasaka N."/>
            <person name="Okada M."/>
            <person name="Kamakura M."/>
            <person name="Taniguchi T."/>
            <person name="Nagai K."/>
            <person name="Ishida N."/>
        </authorList>
    </citation>
    <scope>INTERACTION WITH TIMELESS</scope>
</reference>
<reference key="3">
    <citation type="journal article" date="2001" name="Mol. Cell. Biol.">
        <title>Nuclear entry mechanism of rat PER2 (rPER2): role of rPER2 in nuclear localization of CRY protein.</title>
        <authorList>
            <person name="Miyazaki K."/>
            <person name="Mesaki M."/>
            <person name="Ishida N."/>
        </authorList>
    </citation>
    <scope>INTERACTION WITH CRY1</scope>
    <scope>CRY BINDING DOMAIN</scope>
    <scope>NUCLEAR LOCALIZATION SIGNAL</scope>
    <scope>SUBCELLULAR LOCATION</scope>
</reference>
<reference evidence="13" key="4">
    <citation type="journal article" date="2003" name="Neuroscience">
        <title>Distribution of the rhythm-related genes rPERIOD1, rPERIOD2, and rCLOCK, in the rat brain.</title>
        <authorList>
            <person name="Shieh K.-R."/>
        </authorList>
    </citation>
    <scope>TISSUE SPECIFICITY</scope>
</reference>
<reference key="5">
    <citation type="journal article" date="2004" name="Biochem. Biophys. Res. Commun.">
        <title>A novel autofeedback loop of Dec1 transcription involved in circadian rhythm regulation.</title>
        <authorList>
            <person name="Kawamoto T."/>
            <person name="Noshiro M."/>
            <person name="Sato F."/>
            <person name="Maemura K."/>
            <person name="Takeda N."/>
            <person name="Nagai R."/>
            <person name="Iwata T."/>
            <person name="Fujimoto K."/>
            <person name="Furukawa M."/>
            <person name="Miyazaki K."/>
            <person name="Honma S."/>
            <person name="Honma K.I."/>
            <person name="Kato Y."/>
        </authorList>
    </citation>
    <scope>FUNCTION</scope>
</reference>
<reference evidence="13" key="6">
    <citation type="journal article" date="2004" name="FEBS Lett.">
        <title>Indication of circadian oscillations in the rat pancreas.</title>
        <authorList>
            <person name="Muehlbauer E."/>
            <person name="Wolgast S."/>
            <person name="Finckh U."/>
            <person name="Peschke D."/>
            <person name="Peschke E."/>
        </authorList>
    </citation>
    <scope>TISSUE SPECIFICITY</scope>
    <scope>INDUCTION</scope>
</reference>
<reference key="7">
    <citation type="journal article" date="2008" name="J. Biochem.">
        <title>The role of {beta}-TrCP1 and {beta}-TrCP2 in circadian rhythm generation by mediating degradation of clock protein PER2.</title>
        <authorList>
            <person name="Ohsaki K."/>
            <person name="Oishi K."/>
            <person name="Kozono Y."/>
            <person name="Nakayama K."/>
            <person name="Nakayama K.I."/>
            <person name="Ishida N."/>
        </authorList>
    </citation>
    <scope>INTERACTION WITH BTRC AND FBXW11</scope>
    <scope>MUTAGENESIS OF 93-SER--SER-97 AND 478-SER--SER-482</scope>
</reference>
<reference key="8">
    <citation type="journal article" date="2012" name="Nat. Commun.">
        <title>Quantitative maps of protein phosphorylation sites across 14 different rat organs and tissues.</title>
        <authorList>
            <person name="Lundby A."/>
            <person name="Secher A."/>
            <person name="Lage K."/>
            <person name="Nordsborg N.B."/>
            <person name="Dmytriyev A."/>
            <person name="Lundby C."/>
            <person name="Olsen J.V."/>
        </authorList>
    </citation>
    <scope>PHOSPHORYLATION [LARGE SCALE ANALYSIS] AT SER-693 AND SER-697</scope>
    <scope>IDENTIFICATION BY MASS SPECTROMETRY [LARGE SCALE ANALYSIS]</scope>
</reference>
<dbReference type="EMBL" id="AB016532">
    <property type="protein sequence ID" value="BAA34187.1"/>
    <property type="molecule type" value="mRNA"/>
</dbReference>
<dbReference type="PIR" id="T13957">
    <property type="entry name" value="T13957"/>
</dbReference>
<dbReference type="RefSeq" id="NP_113866.1">
    <property type="nucleotide sequence ID" value="NM_031678.2"/>
</dbReference>
<dbReference type="RefSeq" id="XP_006245538.1">
    <property type="nucleotide sequence ID" value="XM_006245476.5"/>
</dbReference>
<dbReference type="RefSeq" id="XP_017452107.1">
    <property type="nucleotide sequence ID" value="XM_017596618.3"/>
</dbReference>
<dbReference type="RefSeq" id="XP_063123738.1">
    <property type="nucleotide sequence ID" value="XM_063267668.1"/>
</dbReference>
<dbReference type="SMR" id="Q9Z301"/>
<dbReference type="BioGRID" id="248899">
    <property type="interactions" value="2"/>
</dbReference>
<dbReference type="CORUM" id="Q9Z301"/>
<dbReference type="FunCoup" id="Q9Z301">
    <property type="interactions" value="219"/>
</dbReference>
<dbReference type="STRING" id="10116.ENSRNOP00000027507"/>
<dbReference type="GlyGen" id="Q9Z301">
    <property type="glycosylation" value="2 sites"/>
</dbReference>
<dbReference type="iPTMnet" id="Q9Z301"/>
<dbReference type="PhosphoSitePlus" id="Q9Z301"/>
<dbReference type="PaxDb" id="10116-ENSRNOP00000027507"/>
<dbReference type="Ensembl" id="ENSRNOT00000027506.6">
    <property type="protein sequence ID" value="ENSRNOP00000027507.4"/>
    <property type="gene ID" value="ENSRNOG00000020254.8"/>
</dbReference>
<dbReference type="GeneID" id="63840"/>
<dbReference type="KEGG" id="rno:63840"/>
<dbReference type="AGR" id="RGD:61945"/>
<dbReference type="CTD" id="8864"/>
<dbReference type="RGD" id="61945">
    <property type="gene designation" value="Per2"/>
</dbReference>
<dbReference type="eggNOG" id="KOG3753">
    <property type="taxonomic scope" value="Eukaryota"/>
</dbReference>
<dbReference type="GeneTree" id="ENSGT00940000156342"/>
<dbReference type="HOGENOM" id="CLU_006667_0_0_1"/>
<dbReference type="InParanoid" id="Q9Z301"/>
<dbReference type="OMA" id="ENCSMGR"/>
<dbReference type="OrthoDB" id="7788983at2759"/>
<dbReference type="PhylomeDB" id="Q9Z301"/>
<dbReference type="TreeFam" id="TF318445"/>
<dbReference type="PRO" id="PR:Q9Z301"/>
<dbReference type="Proteomes" id="UP000002494">
    <property type="component" value="Chromosome 9"/>
</dbReference>
<dbReference type="Bgee" id="ENSRNOG00000020254">
    <property type="expression patterns" value="Expressed in skeletal muscle tissue and 19 other cell types or tissues"/>
</dbReference>
<dbReference type="GO" id="GO:1990512">
    <property type="term" value="C:Cry-Per complex"/>
    <property type="evidence" value="ECO:0000266"/>
    <property type="project" value="RGD"/>
</dbReference>
<dbReference type="GO" id="GO:0005737">
    <property type="term" value="C:cytoplasm"/>
    <property type="evidence" value="ECO:0000250"/>
    <property type="project" value="UniProtKB"/>
</dbReference>
<dbReference type="GO" id="GO:0005829">
    <property type="term" value="C:cytosol"/>
    <property type="evidence" value="ECO:0007669"/>
    <property type="project" value="Ensembl"/>
</dbReference>
<dbReference type="GO" id="GO:0005654">
    <property type="term" value="C:nucleoplasm"/>
    <property type="evidence" value="ECO:0007669"/>
    <property type="project" value="Ensembl"/>
</dbReference>
<dbReference type="GO" id="GO:0005634">
    <property type="term" value="C:nucleus"/>
    <property type="evidence" value="ECO:0000266"/>
    <property type="project" value="RGD"/>
</dbReference>
<dbReference type="GO" id="GO:0048471">
    <property type="term" value="C:perinuclear region of cytoplasm"/>
    <property type="evidence" value="ECO:0000266"/>
    <property type="project" value="RGD"/>
</dbReference>
<dbReference type="GO" id="GO:0140297">
    <property type="term" value="F:DNA-binding transcription factor binding"/>
    <property type="evidence" value="ECO:0000266"/>
    <property type="project" value="RGD"/>
</dbReference>
<dbReference type="GO" id="GO:0042826">
    <property type="term" value="F:histone deacetylase binding"/>
    <property type="evidence" value="ECO:0000266"/>
    <property type="project" value="RGD"/>
</dbReference>
<dbReference type="GO" id="GO:1990226">
    <property type="term" value="F:histone methyltransferase binding"/>
    <property type="evidence" value="ECO:0000266"/>
    <property type="project" value="RGD"/>
</dbReference>
<dbReference type="GO" id="GO:0042802">
    <property type="term" value="F:identical protein binding"/>
    <property type="evidence" value="ECO:0000266"/>
    <property type="project" value="RGD"/>
</dbReference>
<dbReference type="GO" id="GO:0019900">
    <property type="term" value="F:kinase binding"/>
    <property type="evidence" value="ECO:0000266"/>
    <property type="project" value="RGD"/>
</dbReference>
<dbReference type="GO" id="GO:0016922">
    <property type="term" value="F:nuclear receptor binding"/>
    <property type="evidence" value="ECO:0000266"/>
    <property type="project" value="RGD"/>
</dbReference>
<dbReference type="GO" id="GO:0036002">
    <property type="term" value="F:pre-mRNA binding"/>
    <property type="evidence" value="ECO:0000266"/>
    <property type="project" value="RGD"/>
</dbReference>
<dbReference type="GO" id="GO:0070063">
    <property type="term" value="F:RNA polymerase binding"/>
    <property type="evidence" value="ECO:0000266"/>
    <property type="project" value="RGD"/>
</dbReference>
<dbReference type="GO" id="GO:0000978">
    <property type="term" value="F:RNA polymerase II cis-regulatory region sequence-specific DNA binding"/>
    <property type="evidence" value="ECO:0000266"/>
    <property type="project" value="RGD"/>
</dbReference>
<dbReference type="GO" id="GO:0000976">
    <property type="term" value="F:transcription cis-regulatory region binding"/>
    <property type="evidence" value="ECO:0000250"/>
    <property type="project" value="UniProtKB"/>
</dbReference>
<dbReference type="GO" id="GO:0003713">
    <property type="term" value="F:transcription coactivator activity"/>
    <property type="evidence" value="ECO:0000250"/>
    <property type="project" value="UniProtKB"/>
</dbReference>
<dbReference type="GO" id="GO:0001222">
    <property type="term" value="F:transcription corepressor binding"/>
    <property type="evidence" value="ECO:0000266"/>
    <property type="project" value="RGD"/>
</dbReference>
<dbReference type="GO" id="GO:0006338">
    <property type="term" value="P:chromatin remodeling"/>
    <property type="evidence" value="ECO:0000250"/>
    <property type="project" value="UniProtKB"/>
</dbReference>
<dbReference type="GO" id="GO:0032922">
    <property type="term" value="P:circadian regulation of gene expression"/>
    <property type="evidence" value="ECO:0000250"/>
    <property type="project" value="UniProtKB"/>
</dbReference>
<dbReference type="GO" id="GO:0007623">
    <property type="term" value="P:circadian rhythm"/>
    <property type="evidence" value="ECO:0000270"/>
    <property type="project" value="UniProtKB"/>
</dbReference>
<dbReference type="GO" id="GO:0043153">
    <property type="term" value="P:entrainment of circadian clock by photoperiod"/>
    <property type="evidence" value="ECO:0000318"/>
    <property type="project" value="GO_Central"/>
</dbReference>
<dbReference type="GO" id="GO:0006631">
    <property type="term" value="P:fatty acid metabolic process"/>
    <property type="evidence" value="ECO:0000250"/>
    <property type="project" value="UniProtKB"/>
</dbReference>
<dbReference type="GO" id="GO:0006094">
    <property type="term" value="P:gluconeogenesis"/>
    <property type="evidence" value="ECO:0000250"/>
    <property type="project" value="UniProtKB"/>
</dbReference>
<dbReference type="GO" id="GO:0005978">
    <property type="term" value="P:glycogen biosynthetic process"/>
    <property type="evidence" value="ECO:0000250"/>
    <property type="project" value="UniProtKB"/>
</dbReference>
<dbReference type="GO" id="GO:0019249">
    <property type="term" value="P:lactate biosynthetic process"/>
    <property type="evidence" value="ECO:0000250"/>
    <property type="project" value="UniProtKB"/>
</dbReference>
<dbReference type="GO" id="GO:0042754">
    <property type="term" value="P:negative regulation of circadian rhythm"/>
    <property type="evidence" value="ECO:0000250"/>
    <property type="project" value="UniProtKB"/>
</dbReference>
<dbReference type="GO" id="GO:0045892">
    <property type="term" value="P:negative regulation of DNA-templated transcription"/>
    <property type="evidence" value="ECO:0000314"/>
    <property type="project" value="UniProtKB"/>
</dbReference>
<dbReference type="GO" id="GO:0070345">
    <property type="term" value="P:negative regulation of fat cell proliferation"/>
    <property type="evidence" value="ECO:0000250"/>
    <property type="project" value="UniProtKB"/>
</dbReference>
<dbReference type="GO" id="GO:0031397">
    <property type="term" value="P:negative regulation of protein ubiquitination"/>
    <property type="evidence" value="ECO:0000250"/>
    <property type="project" value="UniProtKB"/>
</dbReference>
<dbReference type="GO" id="GO:0060567">
    <property type="term" value="P:negative regulation of termination of DNA-templated transcription"/>
    <property type="evidence" value="ECO:0000266"/>
    <property type="project" value="RGD"/>
</dbReference>
<dbReference type="GO" id="GO:0000122">
    <property type="term" value="P:negative regulation of transcription by RNA polymerase II"/>
    <property type="evidence" value="ECO:0000314"/>
    <property type="project" value="BHF-UCL"/>
</dbReference>
<dbReference type="GO" id="GO:0003407">
    <property type="term" value="P:neural retina development"/>
    <property type="evidence" value="ECO:0000270"/>
    <property type="project" value="RGD"/>
</dbReference>
<dbReference type="GO" id="GO:0120162">
    <property type="term" value="P:positive regulation of cold-induced thermogenesis"/>
    <property type="evidence" value="ECO:0000250"/>
    <property type="project" value="YuBioLab"/>
</dbReference>
<dbReference type="GO" id="GO:0051726">
    <property type="term" value="P:regulation of cell cycle"/>
    <property type="evidence" value="ECO:0000250"/>
    <property type="project" value="UniProtKB"/>
</dbReference>
<dbReference type="GO" id="GO:0042752">
    <property type="term" value="P:regulation of circadian rhythm"/>
    <property type="evidence" value="ECO:0000250"/>
    <property type="project" value="UniProtKB"/>
</dbReference>
<dbReference type="GO" id="GO:0051946">
    <property type="term" value="P:regulation of glutamate uptake involved in transmission of nerve impulse"/>
    <property type="evidence" value="ECO:0000250"/>
    <property type="project" value="UniProtKB"/>
</dbReference>
<dbReference type="GO" id="GO:0050796">
    <property type="term" value="P:regulation of insulin secretion"/>
    <property type="evidence" value="ECO:0000250"/>
    <property type="project" value="UniProtKB"/>
</dbReference>
<dbReference type="GO" id="GO:0050767">
    <property type="term" value="P:regulation of neurogenesis"/>
    <property type="evidence" value="ECO:0000250"/>
    <property type="project" value="UniProtKB"/>
</dbReference>
<dbReference type="GO" id="GO:0019229">
    <property type="term" value="P:regulation of vasoconstriction"/>
    <property type="evidence" value="ECO:0000250"/>
    <property type="project" value="UniProtKB"/>
</dbReference>
<dbReference type="GO" id="GO:0002931">
    <property type="term" value="P:response to ischemia"/>
    <property type="evidence" value="ECO:0000250"/>
    <property type="project" value="UniProtKB"/>
</dbReference>
<dbReference type="GO" id="GO:0050872">
    <property type="term" value="P:white fat cell differentiation"/>
    <property type="evidence" value="ECO:0000250"/>
    <property type="project" value="UniProtKB"/>
</dbReference>
<dbReference type="CDD" id="cd00130">
    <property type="entry name" value="PAS"/>
    <property type="match status" value="1"/>
</dbReference>
<dbReference type="FunFam" id="3.30.450.20:FF:000013">
    <property type="entry name" value="Period circadian protein homolog 2"/>
    <property type="match status" value="1"/>
</dbReference>
<dbReference type="FunFam" id="3.30.450.20:FF:000004">
    <property type="entry name" value="Period circadian protein homolog 3"/>
    <property type="match status" value="1"/>
</dbReference>
<dbReference type="Gene3D" id="3.30.450.20">
    <property type="entry name" value="PAS domain"/>
    <property type="match status" value="2"/>
</dbReference>
<dbReference type="InterPro" id="IPR000014">
    <property type="entry name" value="PAS"/>
</dbReference>
<dbReference type="InterPro" id="IPR035965">
    <property type="entry name" value="PAS-like_dom_sf"/>
</dbReference>
<dbReference type="InterPro" id="IPR013655">
    <property type="entry name" value="PAS_fold_3"/>
</dbReference>
<dbReference type="InterPro" id="IPR048814">
    <property type="entry name" value="Per1-3_PAS-A"/>
</dbReference>
<dbReference type="InterPro" id="IPR022728">
    <property type="entry name" value="Period_circadian-like_C"/>
</dbReference>
<dbReference type="InterPro" id="IPR050760">
    <property type="entry name" value="Period_circadian_regulator"/>
</dbReference>
<dbReference type="PANTHER" id="PTHR11269">
    <property type="entry name" value="PERIOD CIRCADIAN PROTEIN"/>
    <property type="match status" value="1"/>
</dbReference>
<dbReference type="PANTHER" id="PTHR11269:SF9">
    <property type="entry name" value="PERIOD CIRCADIAN PROTEIN HOMOLOG 2"/>
    <property type="match status" value="1"/>
</dbReference>
<dbReference type="Pfam" id="PF23170">
    <property type="entry name" value="bHLH_PER"/>
    <property type="match status" value="1"/>
</dbReference>
<dbReference type="Pfam" id="PF08447">
    <property type="entry name" value="PAS_3"/>
    <property type="match status" value="1"/>
</dbReference>
<dbReference type="Pfam" id="PF21353">
    <property type="entry name" value="Per3-like_PAS-A"/>
    <property type="match status" value="1"/>
</dbReference>
<dbReference type="Pfam" id="PF12114">
    <property type="entry name" value="Period_C"/>
    <property type="match status" value="1"/>
</dbReference>
<dbReference type="SMART" id="SM00091">
    <property type="entry name" value="PAS"/>
    <property type="match status" value="2"/>
</dbReference>
<dbReference type="SUPFAM" id="SSF55785">
    <property type="entry name" value="PYP-like sensor domain (PAS domain)"/>
    <property type="match status" value="1"/>
</dbReference>
<dbReference type="PROSITE" id="PS50112">
    <property type="entry name" value="PAS"/>
    <property type="match status" value="1"/>
</dbReference>
<protein>
    <recommendedName>
        <fullName>Period circadian protein homolog 2</fullName>
        <shortName>rPER2</shortName>
    </recommendedName>
    <alternativeName>
        <fullName>Circadian clock protein PERIOD 2</fullName>
    </alternativeName>
</protein>
<keyword id="KW-0007">Acetylation</keyword>
<keyword id="KW-0090">Biological rhythms</keyword>
<keyword id="KW-0963">Cytoplasm</keyword>
<keyword id="KW-0539">Nucleus</keyword>
<keyword id="KW-0597">Phosphoprotein</keyword>
<keyword id="KW-1185">Reference proteome</keyword>
<keyword id="KW-0677">Repeat</keyword>
<keyword id="KW-0804">Transcription</keyword>
<keyword id="KW-0805">Transcription regulation</keyword>
<keyword id="KW-0832">Ubl conjugation</keyword>
<name>PER2_RAT</name>